<comment type="function">
    <text>Binds preferentially to single-stranded DNA and therefore, destabilizes double-stranded DNA. It is involved in DNA replication, repair and recombination. Binds ss-DNA as the replication fork advances and stimulates the replisome processivity and accuracy.</text>
</comment>
<comment type="subunit">
    <text evidence="1">Homodimer in the absence of DNA, monomer when binding DNA.</text>
</comment>
<comment type="miscellaneous">
    <text evidence="1">Interacts with the polymerase and the uvsX and uvsY proteins.</text>
</comment>
<organism>
    <name type="scientific">Enterobacteria phage RB18</name>
    <name type="common">Bacteriophage RB18</name>
    <dbReference type="NCBI Taxonomy" id="10692"/>
    <lineage>
        <taxon>Viruses</taxon>
        <taxon>Duplodnaviria</taxon>
        <taxon>Heunggongvirae</taxon>
        <taxon>Uroviricota</taxon>
        <taxon>Caudoviricetes</taxon>
        <taxon>Straboviridae</taxon>
        <taxon>Tevenvirinae</taxon>
        <taxon>Tequatrovirus</taxon>
        <taxon>Tequatrovirus RB18</taxon>
    </lineage>
</organism>
<organismHost>
    <name type="scientific">Escherichia coli</name>
    <dbReference type="NCBI Taxonomy" id="562"/>
</organismHost>
<feature type="chain" id="PRO_0000165059" description="Single-stranded DNA-binding protein">
    <location>
        <begin position="1"/>
        <end position="50" status="greater than"/>
    </location>
</feature>
<feature type="non-terminal residue">
    <location>
        <position position="50"/>
    </location>
</feature>
<reference key="1">
    <citation type="submission" date="1997-11" db="EMBL/GenBank/DDBJ databases">
        <authorList>
            <person name="Theimer C.A."/>
            <person name="Krisch H.M."/>
            <person name="Giedroc D.P."/>
        </authorList>
    </citation>
    <scope>NUCLEOTIDE SEQUENCE [GENOMIC DNA]</scope>
</reference>
<proteinExistence type="inferred from homology"/>
<gene>
    <name type="primary">32</name>
    <name type="synonym">ssb</name>
</gene>
<protein>
    <recommendedName>
        <fullName>Single-stranded DNA-binding protein</fullName>
    </recommendedName>
    <alternativeName>
        <fullName>Gp32</fullName>
    </alternativeName>
    <alternativeName>
        <fullName>Helix-destabilizing protein</fullName>
    </alternativeName>
</protein>
<name>VHED_BPR18</name>
<keyword id="KW-0227">DNA damage</keyword>
<keyword id="KW-0233">DNA recombination</keyword>
<keyword id="KW-0234">DNA repair</keyword>
<keyword id="KW-0235">DNA replication</keyword>
<keyword id="KW-0238">DNA-binding</keyword>
<keyword id="KW-0479">Metal-binding</keyword>
<keyword id="KW-0862">Zinc</keyword>
<keyword id="KW-0863">Zinc-finger</keyword>
<dbReference type="EMBL" id="AF033329">
    <property type="protein sequence ID" value="AAB87494.1"/>
    <property type="molecule type" value="Genomic_DNA"/>
</dbReference>
<dbReference type="SMR" id="O21956"/>
<dbReference type="GO" id="GO:0003677">
    <property type="term" value="F:DNA binding"/>
    <property type="evidence" value="ECO:0007669"/>
    <property type="project" value="UniProtKB-KW"/>
</dbReference>
<dbReference type="GO" id="GO:0008270">
    <property type="term" value="F:zinc ion binding"/>
    <property type="evidence" value="ECO:0007669"/>
    <property type="project" value="UniProtKB-KW"/>
</dbReference>
<dbReference type="GO" id="GO:0006310">
    <property type="term" value="P:DNA recombination"/>
    <property type="evidence" value="ECO:0007669"/>
    <property type="project" value="UniProtKB-KW"/>
</dbReference>
<dbReference type="GO" id="GO:0006281">
    <property type="term" value="P:DNA repair"/>
    <property type="evidence" value="ECO:0007669"/>
    <property type="project" value="UniProtKB-KW"/>
</dbReference>
<dbReference type="GO" id="GO:0006260">
    <property type="term" value="P:DNA replication"/>
    <property type="evidence" value="ECO:0007669"/>
    <property type="project" value="UniProtKB-KW"/>
</dbReference>
<dbReference type="Gene3D" id="3.90.198.10">
    <property type="entry name" value="Replication Fork Single-Stranded Dna Binding Protein"/>
    <property type="match status" value="1"/>
</dbReference>
<dbReference type="InterPro" id="IPR012340">
    <property type="entry name" value="NA-bd_OB-fold"/>
</dbReference>
<dbReference type="InterPro" id="IPR044947">
    <property type="entry name" value="Phage_T4_Gp32_ssDNA-bd_sf"/>
</dbReference>
<dbReference type="SUPFAM" id="SSF50249">
    <property type="entry name" value="Nucleic acid-binding proteins"/>
    <property type="match status" value="1"/>
</dbReference>
<accession>O21956</accession>
<sequence>MFKRKSTAELAAQMAKLAGNKGGFSSEDKGEWKLKLDNAGNGQAVIRFLP</sequence>
<evidence type="ECO:0000250" key="1"/>